<keyword id="KW-0131">Cell cycle</keyword>
<keyword id="KW-0132">Cell division</keyword>
<keyword id="KW-0159">Chromosome partition</keyword>
<keyword id="KW-0963">Cytoplasm</keyword>
<keyword id="KW-0229">DNA integration</keyword>
<keyword id="KW-0233">DNA recombination</keyword>
<keyword id="KW-0238">DNA-binding</keyword>
<keyword id="KW-1185">Reference proteome</keyword>
<feature type="chain" id="PRO_0000095405" description="Tyrosine recombinase XerD">
    <location>
        <begin position="1"/>
        <end position="298"/>
    </location>
</feature>
<feature type="domain" description="Core-binding (CB)" evidence="3">
    <location>
        <begin position="3"/>
        <end position="88"/>
    </location>
</feature>
<feature type="domain" description="Tyr recombinase" evidence="2">
    <location>
        <begin position="109"/>
        <end position="292"/>
    </location>
</feature>
<feature type="active site" evidence="1">
    <location>
        <position position="149"/>
    </location>
</feature>
<feature type="active site" evidence="1">
    <location>
        <position position="173"/>
    </location>
</feature>
<feature type="active site" evidence="1">
    <location>
        <position position="244"/>
    </location>
</feature>
<feature type="active site" evidence="1">
    <location>
        <position position="247"/>
    </location>
</feature>
<feature type="active site" evidence="1">
    <location>
        <position position="270"/>
    </location>
</feature>
<feature type="active site" description="O-(3'-phospho-DNA)-tyrosine intermediate" evidence="1">
    <location>
        <position position="279"/>
    </location>
</feature>
<evidence type="ECO:0000255" key="1">
    <source>
        <dbReference type="HAMAP-Rule" id="MF_01807"/>
    </source>
</evidence>
<evidence type="ECO:0000255" key="2">
    <source>
        <dbReference type="PROSITE-ProRule" id="PRU01246"/>
    </source>
</evidence>
<evidence type="ECO:0000255" key="3">
    <source>
        <dbReference type="PROSITE-ProRule" id="PRU01248"/>
    </source>
</evidence>
<sequence>MSTLEHPLIDRFLDALWLEKGLADNTREAYRNDLQQFNAWLDGRGLRLEGIGRDAILDHLAWRLEQGYKARSTARFLSGLRGFYRYCLRDGLIAEDPTLQVDLPQLGKPLPKSLSEADVEALLAAPEVDDPLGLRDRTMLEVLYACGLRVSELVGLTLEQVNLRQGVVKVFGKGSKERLVPLGEEAIGWLERYLREARGDLLGGRPSDVLFPSLRGEQMTRQTFWHRIKHHAQVAAIGTSISPHTLRHAFATHLLNHGADLRVVQMLLGHSDLSTTQIYTHIARARLQDLHARHHPRG</sequence>
<gene>
    <name evidence="1" type="primary">xerD</name>
    <name type="ordered locus">PA3738</name>
</gene>
<name>XERD_PSEAE</name>
<protein>
    <recommendedName>
        <fullName evidence="1">Tyrosine recombinase XerD</fullName>
    </recommendedName>
</protein>
<organism>
    <name type="scientific">Pseudomonas aeruginosa (strain ATCC 15692 / DSM 22644 / CIP 104116 / JCM 14847 / LMG 12228 / 1C / PRS 101 / PAO1)</name>
    <dbReference type="NCBI Taxonomy" id="208964"/>
    <lineage>
        <taxon>Bacteria</taxon>
        <taxon>Pseudomonadati</taxon>
        <taxon>Pseudomonadota</taxon>
        <taxon>Gammaproteobacteria</taxon>
        <taxon>Pseudomonadales</taxon>
        <taxon>Pseudomonadaceae</taxon>
        <taxon>Pseudomonas</taxon>
    </lineage>
</organism>
<accession>Q9HXQ6</accession>
<proteinExistence type="inferred from homology"/>
<dbReference type="EMBL" id="AE004091">
    <property type="protein sequence ID" value="AAG07125.1"/>
    <property type="molecule type" value="Genomic_DNA"/>
</dbReference>
<dbReference type="PIR" id="F83177">
    <property type="entry name" value="F83177"/>
</dbReference>
<dbReference type="RefSeq" id="NP_252427.1">
    <property type="nucleotide sequence ID" value="NC_002516.2"/>
</dbReference>
<dbReference type="RefSeq" id="WP_003092629.1">
    <property type="nucleotide sequence ID" value="NZ_QZGE01000001.1"/>
</dbReference>
<dbReference type="SMR" id="Q9HXQ6"/>
<dbReference type="FunCoup" id="Q9HXQ6">
    <property type="interactions" value="212"/>
</dbReference>
<dbReference type="STRING" id="208964.PA3738"/>
<dbReference type="PaxDb" id="208964-PA3738"/>
<dbReference type="DNASU" id="880331"/>
<dbReference type="GeneID" id="880331"/>
<dbReference type="KEGG" id="pae:PA3738"/>
<dbReference type="PATRIC" id="fig|208964.12.peg.3910"/>
<dbReference type="PseudoCAP" id="PA3738"/>
<dbReference type="HOGENOM" id="CLU_027562_9_0_6"/>
<dbReference type="InParanoid" id="Q9HXQ6"/>
<dbReference type="OrthoDB" id="9801717at2"/>
<dbReference type="PhylomeDB" id="Q9HXQ6"/>
<dbReference type="BioCyc" id="PAER208964:G1FZ6-3809-MONOMER"/>
<dbReference type="Proteomes" id="UP000002438">
    <property type="component" value="Chromosome"/>
</dbReference>
<dbReference type="GO" id="GO:0005737">
    <property type="term" value="C:cytoplasm"/>
    <property type="evidence" value="ECO:0007669"/>
    <property type="project" value="UniProtKB-SubCell"/>
</dbReference>
<dbReference type="GO" id="GO:0048476">
    <property type="term" value="C:Holliday junction resolvase complex"/>
    <property type="evidence" value="ECO:0000318"/>
    <property type="project" value="GO_Central"/>
</dbReference>
<dbReference type="GO" id="GO:0003677">
    <property type="term" value="F:DNA binding"/>
    <property type="evidence" value="ECO:0000318"/>
    <property type="project" value="GO_Central"/>
</dbReference>
<dbReference type="GO" id="GO:0009037">
    <property type="term" value="F:tyrosine-based site-specific recombinase activity"/>
    <property type="evidence" value="ECO:0000318"/>
    <property type="project" value="GO_Central"/>
</dbReference>
<dbReference type="GO" id="GO:0051301">
    <property type="term" value="P:cell division"/>
    <property type="evidence" value="ECO:0007669"/>
    <property type="project" value="UniProtKB-KW"/>
</dbReference>
<dbReference type="GO" id="GO:0007059">
    <property type="term" value="P:chromosome segregation"/>
    <property type="evidence" value="ECO:0000318"/>
    <property type="project" value="GO_Central"/>
</dbReference>
<dbReference type="GO" id="GO:0006310">
    <property type="term" value="P:DNA recombination"/>
    <property type="evidence" value="ECO:0000318"/>
    <property type="project" value="GO_Central"/>
</dbReference>
<dbReference type="GO" id="GO:0006313">
    <property type="term" value="P:DNA transposition"/>
    <property type="evidence" value="ECO:0007669"/>
    <property type="project" value="UniProtKB-UniRule"/>
</dbReference>
<dbReference type="GO" id="GO:0071139">
    <property type="term" value="P:resolution of DNA recombination intermediates"/>
    <property type="evidence" value="ECO:0000318"/>
    <property type="project" value="GO_Central"/>
</dbReference>
<dbReference type="CDD" id="cd00798">
    <property type="entry name" value="INT_XerDC_C"/>
    <property type="match status" value="1"/>
</dbReference>
<dbReference type="Gene3D" id="1.10.150.130">
    <property type="match status" value="1"/>
</dbReference>
<dbReference type="Gene3D" id="1.10.443.10">
    <property type="entry name" value="Intergrase catalytic core"/>
    <property type="match status" value="1"/>
</dbReference>
<dbReference type="HAMAP" id="MF_01808">
    <property type="entry name" value="Recomb_XerC_XerD"/>
    <property type="match status" value="1"/>
</dbReference>
<dbReference type="HAMAP" id="MF_01807">
    <property type="entry name" value="Recomb_XerD"/>
    <property type="match status" value="1"/>
</dbReference>
<dbReference type="InterPro" id="IPR044068">
    <property type="entry name" value="CB"/>
</dbReference>
<dbReference type="InterPro" id="IPR011010">
    <property type="entry name" value="DNA_brk_join_enz"/>
</dbReference>
<dbReference type="InterPro" id="IPR013762">
    <property type="entry name" value="Integrase-like_cat_sf"/>
</dbReference>
<dbReference type="InterPro" id="IPR002104">
    <property type="entry name" value="Integrase_catalytic"/>
</dbReference>
<dbReference type="InterPro" id="IPR010998">
    <property type="entry name" value="Integrase_recombinase_N"/>
</dbReference>
<dbReference type="InterPro" id="IPR004107">
    <property type="entry name" value="Integrase_SAM-like_N"/>
</dbReference>
<dbReference type="InterPro" id="IPR011932">
    <property type="entry name" value="Recomb_XerD"/>
</dbReference>
<dbReference type="InterPro" id="IPR023009">
    <property type="entry name" value="Tyrosine_recombinase_XerC/XerD"/>
</dbReference>
<dbReference type="InterPro" id="IPR050090">
    <property type="entry name" value="Tyrosine_recombinase_XerCD"/>
</dbReference>
<dbReference type="NCBIfam" id="NF001399">
    <property type="entry name" value="PRK00283.1"/>
    <property type="match status" value="1"/>
</dbReference>
<dbReference type="NCBIfam" id="TIGR02225">
    <property type="entry name" value="recomb_XerD"/>
    <property type="match status" value="1"/>
</dbReference>
<dbReference type="PANTHER" id="PTHR30349">
    <property type="entry name" value="PHAGE INTEGRASE-RELATED"/>
    <property type="match status" value="1"/>
</dbReference>
<dbReference type="PANTHER" id="PTHR30349:SF90">
    <property type="entry name" value="TYROSINE RECOMBINASE XERD"/>
    <property type="match status" value="1"/>
</dbReference>
<dbReference type="Pfam" id="PF02899">
    <property type="entry name" value="Phage_int_SAM_1"/>
    <property type="match status" value="1"/>
</dbReference>
<dbReference type="Pfam" id="PF00589">
    <property type="entry name" value="Phage_integrase"/>
    <property type="match status" value="1"/>
</dbReference>
<dbReference type="SUPFAM" id="SSF56349">
    <property type="entry name" value="DNA breaking-rejoining enzymes"/>
    <property type="match status" value="1"/>
</dbReference>
<dbReference type="PROSITE" id="PS51900">
    <property type="entry name" value="CB"/>
    <property type="match status" value="1"/>
</dbReference>
<dbReference type="PROSITE" id="PS51898">
    <property type="entry name" value="TYR_RECOMBINASE"/>
    <property type="match status" value="1"/>
</dbReference>
<reference key="1">
    <citation type="journal article" date="2000" name="Nature">
        <title>Complete genome sequence of Pseudomonas aeruginosa PAO1, an opportunistic pathogen.</title>
        <authorList>
            <person name="Stover C.K."/>
            <person name="Pham X.-Q.T."/>
            <person name="Erwin A.L."/>
            <person name="Mizoguchi S.D."/>
            <person name="Warrener P."/>
            <person name="Hickey M.J."/>
            <person name="Brinkman F.S.L."/>
            <person name="Hufnagle W.O."/>
            <person name="Kowalik D.J."/>
            <person name="Lagrou M."/>
            <person name="Garber R.L."/>
            <person name="Goltry L."/>
            <person name="Tolentino E."/>
            <person name="Westbrock-Wadman S."/>
            <person name="Yuan Y."/>
            <person name="Brody L.L."/>
            <person name="Coulter S.N."/>
            <person name="Folger K.R."/>
            <person name="Kas A."/>
            <person name="Larbig K."/>
            <person name="Lim R.M."/>
            <person name="Smith K.A."/>
            <person name="Spencer D.H."/>
            <person name="Wong G.K.-S."/>
            <person name="Wu Z."/>
            <person name="Paulsen I.T."/>
            <person name="Reizer J."/>
            <person name="Saier M.H. Jr."/>
            <person name="Hancock R.E.W."/>
            <person name="Lory S."/>
            <person name="Olson M.V."/>
        </authorList>
    </citation>
    <scope>NUCLEOTIDE SEQUENCE [LARGE SCALE GENOMIC DNA]</scope>
    <source>
        <strain>ATCC 15692 / DSM 22644 / CIP 104116 / JCM 14847 / LMG 12228 / 1C / PRS 101 / PAO1</strain>
    </source>
</reference>
<comment type="function">
    <text evidence="1">Site-specific tyrosine recombinase, which acts by catalyzing the cutting and rejoining of the recombining DNA molecules. The XerC-XerD complex is essential to convert dimers of the bacterial chromosome into monomers to permit their segregation at cell division. It also contributes to the segregational stability of plasmids.</text>
</comment>
<comment type="subunit">
    <text evidence="1">Forms a cyclic heterotetrameric complex composed of two molecules of XerC and two molecules of XerD.</text>
</comment>
<comment type="subcellular location">
    <subcellularLocation>
        <location evidence="1">Cytoplasm</location>
    </subcellularLocation>
</comment>
<comment type="similarity">
    <text evidence="1">Belongs to the 'phage' integrase family. XerD subfamily.</text>
</comment>